<protein>
    <recommendedName>
        <fullName>Dihydromethanopterin reductase</fullName>
        <ecNumber>1.5.1.47</ecNumber>
    </recommendedName>
    <alternativeName>
        <fullName>H(2)MPT reductase</fullName>
    </alternativeName>
</protein>
<gene>
    <name type="primary">dmrA</name>
    <name type="ordered locus">MexAM1_META1p4312</name>
</gene>
<feature type="chain" id="PRO_0000424083" description="Dihydromethanopterin reductase">
    <location>
        <begin position="1"/>
        <end position="135"/>
    </location>
</feature>
<feature type="binding site" evidence="1">
    <location>
        <position position="9"/>
    </location>
    <ligand>
        <name>NADP(+)</name>
        <dbReference type="ChEBI" id="CHEBI:58349"/>
    </ligand>
</feature>
<feature type="binding site" evidence="1">
    <location>
        <begin position="16"/>
        <end position="21"/>
    </location>
    <ligand>
        <name>NADP(+)</name>
        <dbReference type="ChEBI" id="CHEBI:58349"/>
    </ligand>
</feature>
<feature type="binding site" evidence="1">
    <location>
        <begin position="52"/>
        <end position="54"/>
    </location>
    <ligand>
        <name>NADP(+)</name>
        <dbReference type="ChEBI" id="CHEBI:58349"/>
    </ligand>
</feature>
<feature type="binding site" evidence="1">
    <location>
        <begin position="93"/>
        <end position="97"/>
    </location>
    <ligand>
        <name>NADP(+)</name>
        <dbReference type="ChEBI" id="CHEBI:58349"/>
    </ligand>
</feature>
<evidence type="ECO:0000250" key="1"/>
<evidence type="ECO:0000269" key="2">
    <source>
    </source>
</evidence>
<evidence type="ECO:0000269" key="3">
    <source>
    </source>
</evidence>
<evidence type="ECO:0000305" key="4">
    <source>
    </source>
</evidence>
<accession>C5B2R8</accession>
<accession>Q8KQF4</accession>
<comment type="function">
    <text evidence="2 3">Catalyzes the reduction of dihydromethanopterin (H(2)MPT) to tetrahydromethanopterin (H(4)MPT). Shows preference for NADPH rather than NADH as electron donor. Does not reduce dihydrofolate.</text>
</comment>
<comment type="catalytic activity">
    <reaction evidence="3">
        <text>5,6,7,8-tetrahydromethanopterin + NAD(+) = 7,8-dihydromethanopterin + NADH + H(+)</text>
        <dbReference type="Rhea" id="RHEA:35823"/>
        <dbReference type="ChEBI" id="CHEBI:15378"/>
        <dbReference type="ChEBI" id="CHEBI:57540"/>
        <dbReference type="ChEBI" id="CHEBI:57945"/>
        <dbReference type="ChEBI" id="CHEBI:58103"/>
        <dbReference type="ChEBI" id="CHEBI:72788"/>
        <dbReference type="EC" id="1.5.1.47"/>
    </reaction>
</comment>
<comment type="catalytic activity">
    <reaction evidence="3">
        <text>5,6,7,8-tetrahydromethanopterin + NADP(+) = 7,8-dihydromethanopterin + NADPH + H(+)</text>
        <dbReference type="Rhea" id="RHEA:35819"/>
        <dbReference type="ChEBI" id="CHEBI:15378"/>
        <dbReference type="ChEBI" id="CHEBI:57783"/>
        <dbReference type="ChEBI" id="CHEBI:58103"/>
        <dbReference type="ChEBI" id="CHEBI:58349"/>
        <dbReference type="ChEBI" id="CHEBI:72788"/>
        <dbReference type="EC" id="1.5.1.47"/>
    </reaction>
</comment>
<comment type="biophysicochemical properties">
    <phDependence>
        <text evidence="3">Optimum pH is 5.3.</text>
    </phDependence>
    <temperatureDependence>
        <text evidence="3">Optimum temperature is 30 degrees Celsius (at pH 5.3).</text>
    </temperatureDependence>
</comment>
<comment type="pathway">
    <text evidence="3">Cofactor biosynthesis; 5,6,7,8-tetrahydromethanopterin biosynthesis.</text>
</comment>
<comment type="subunit">
    <text evidence="4">Homodimer.</text>
</comment>
<comment type="disruption phenotype">
    <text evidence="2">Mutants have a C1-defective and methanol-sensitive phenotype.</text>
</comment>
<keyword id="KW-0521">NADP</keyword>
<keyword id="KW-0560">Oxidoreductase</keyword>
<keyword id="KW-1185">Reference proteome</keyword>
<sequence>MIDVRCICAIGQRGQLGLNGHLPWEGNTDPLFVEDVTRFFALTMGHVLIAGPKTVASVPEFAFKDRTIDVIRSHEDPEAVLKRYPGRRIFVGGGIAVWNVYAKYIQHWDVTRLPYDGEADRWFDPAWLVGGPLRS</sequence>
<proteinExistence type="evidence at protein level"/>
<dbReference type="EC" id="1.5.1.47"/>
<dbReference type="EMBL" id="AY093431">
    <property type="protein sequence ID" value="AAM19724.1"/>
    <property type="molecule type" value="Genomic_DNA"/>
</dbReference>
<dbReference type="EMBL" id="CP001510">
    <property type="protein sequence ID" value="ACS41948.1"/>
    <property type="molecule type" value="Genomic_DNA"/>
</dbReference>
<dbReference type="RefSeq" id="WP_003606487.1">
    <property type="nucleotide sequence ID" value="NC_012808.1"/>
</dbReference>
<dbReference type="SMR" id="C5B2R8"/>
<dbReference type="STRING" id="272630.MexAM1_META1p4312"/>
<dbReference type="KEGG" id="mea:Mex_1p4312"/>
<dbReference type="eggNOG" id="COG0262">
    <property type="taxonomic scope" value="Bacteria"/>
</dbReference>
<dbReference type="HOGENOM" id="CLU_1872632_0_0_5"/>
<dbReference type="OrthoDB" id="7932254at2"/>
<dbReference type="BioCyc" id="MetaCyc:MONOMER-18688"/>
<dbReference type="BRENDA" id="1.5.1.47">
    <property type="organism ID" value="3296"/>
</dbReference>
<dbReference type="UniPathway" id="UPA00065"/>
<dbReference type="Proteomes" id="UP000009081">
    <property type="component" value="Chromosome"/>
</dbReference>
<dbReference type="GO" id="GO:0004146">
    <property type="term" value="F:dihydrofolate reductase activity"/>
    <property type="evidence" value="ECO:0007669"/>
    <property type="project" value="InterPro"/>
</dbReference>
<dbReference type="GO" id="GO:0046654">
    <property type="term" value="P:tetrahydrofolate biosynthetic process"/>
    <property type="evidence" value="ECO:0007669"/>
    <property type="project" value="InterPro"/>
</dbReference>
<dbReference type="Gene3D" id="3.40.430.10">
    <property type="entry name" value="Dihydrofolate Reductase, subunit A"/>
    <property type="match status" value="1"/>
</dbReference>
<dbReference type="InterPro" id="IPR024072">
    <property type="entry name" value="DHFR-like_dom_sf"/>
</dbReference>
<dbReference type="InterPro" id="IPR001796">
    <property type="entry name" value="DHFR_dom"/>
</dbReference>
<dbReference type="Pfam" id="PF00186">
    <property type="entry name" value="DHFR_1"/>
    <property type="match status" value="1"/>
</dbReference>
<dbReference type="SUPFAM" id="SSF53597">
    <property type="entry name" value="Dihydrofolate reductase-like"/>
    <property type="match status" value="1"/>
</dbReference>
<reference key="1">
    <citation type="journal article" date="2003" name="J. Bacteriol.">
        <title>Novel methylotrophy genes of Methylobacterium extorquens AM1 identified by using transposon mutagenesis including a putative dihydromethanopterin reductase.</title>
        <authorList>
            <person name="Marx C.J."/>
            <person name="O'Brien B.N."/>
            <person name="Breezee J."/>
            <person name="Lidstrom M.E."/>
        </authorList>
    </citation>
    <scope>NUCLEOTIDE SEQUENCE [GENOMIC DNA]</scope>
    <scope>DISRUPTION PHENOTYPE</scope>
    <scope>FUNCTION</scope>
    <scope>GENE NAME</scope>
    <source>
        <strain>ATCC 14718 / DSM 1338 / JCM 2805 / NCIMB 9133 / AM1</strain>
    </source>
</reference>
<reference key="2">
    <citation type="journal article" date="2009" name="PLoS ONE">
        <title>Methylobacterium genome sequences: a reference blueprint to investigate microbial metabolism of C1 compounds from natural and industrial sources.</title>
        <authorList>
            <person name="Vuilleumier S."/>
            <person name="Chistoserdova L."/>
            <person name="Lee M.-C."/>
            <person name="Bringel F."/>
            <person name="Lajus A."/>
            <person name="Zhou Y."/>
            <person name="Gourion B."/>
            <person name="Barbe V."/>
            <person name="Chang J."/>
            <person name="Cruveiller S."/>
            <person name="Dossat C."/>
            <person name="Gillett W."/>
            <person name="Gruffaz C."/>
            <person name="Haugen E."/>
            <person name="Hourcade E."/>
            <person name="Levy R."/>
            <person name="Mangenot S."/>
            <person name="Muller E."/>
            <person name="Nadalig T."/>
            <person name="Pagni M."/>
            <person name="Penny C."/>
            <person name="Peyraud R."/>
            <person name="Robinson D.G."/>
            <person name="Roche D."/>
            <person name="Rouy Z."/>
            <person name="Saenampechek C."/>
            <person name="Salvignol G."/>
            <person name="Vallenet D."/>
            <person name="Wu Z."/>
            <person name="Marx C.J."/>
            <person name="Vorholt J.A."/>
            <person name="Olson M.V."/>
            <person name="Kaul R."/>
            <person name="Weissenbach J."/>
            <person name="Medigue C."/>
            <person name="Lidstrom M.E."/>
        </authorList>
    </citation>
    <scope>NUCLEOTIDE SEQUENCE [LARGE SCALE GENOMIC DNA]</scope>
    <source>
        <strain>ATCC 14718 / DSM 1338 / JCM 2805 / NCIMB 9133 / AM1</strain>
    </source>
</reference>
<reference key="3">
    <citation type="journal article" date="2004" name="J. Bacteriol.">
        <title>Biochemical characterization of a dihydromethanopterin reductase involved in tetrahydromethanopterin biosynthesis in Methylobacterium extorquens AM1.</title>
        <authorList>
            <person name="Caccamo M.A."/>
            <person name="Malone C.S."/>
            <person name="Rasche M.E."/>
        </authorList>
    </citation>
    <scope>FUNCTION</scope>
    <scope>CATALYTIC ACTIVITY</scope>
    <scope>BIOPHYSICOCHEMICAL PROPERTIES</scope>
    <scope>PATHWAY</scope>
    <scope>SUBUNIT</scope>
    <source>
        <strain>ATCC 14718 / DSM 1338 / JCM 2805 / NCIMB 9133 / AM1</strain>
    </source>
</reference>
<organism>
    <name type="scientific">Methylorubrum extorquens (strain ATCC 14718 / DSM 1338 / JCM 2805 / NCIMB 9133 / AM1)</name>
    <name type="common">Methylobacterium extorquens</name>
    <dbReference type="NCBI Taxonomy" id="272630"/>
    <lineage>
        <taxon>Bacteria</taxon>
        <taxon>Pseudomonadati</taxon>
        <taxon>Pseudomonadota</taxon>
        <taxon>Alphaproteobacteria</taxon>
        <taxon>Hyphomicrobiales</taxon>
        <taxon>Methylobacteriaceae</taxon>
        <taxon>Methylorubrum</taxon>
    </lineage>
</organism>
<name>DMRA_METEA</name>